<keyword id="KW-0002">3D-structure</keyword>
<keyword id="KW-0158">Chromosome</keyword>
<keyword id="KW-0963">Cytoplasm</keyword>
<keyword id="KW-0238">DNA-binding</keyword>
<keyword id="KW-0539">Nucleus</keyword>
<keyword id="KW-0597">Phosphoprotein</keyword>
<keyword id="KW-1185">Reference proteome</keyword>
<keyword id="KW-0677">Repeat</keyword>
<keyword id="KW-0779">Telomere</keyword>
<evidence type="ECO:0000256" key="1">
    <source>
        <dbReference type="SAM" id="MobiDB-lite"/>
    </source>
</evidence>
<evidence type="ECO:0000269" key="2">
    <source>
    </source>
</evidence>
<evidence type="ECO:0000269" key="3">
    <source>
    </source>
</evidence>
<evidence type="ECO:0000269" key="4">
    <source>
    </source>
</evidence>
<evidence type="ECO:0007829" key="5">
    <source>
        <dbReference type="PDB" id="2L3N"/>
    </source>
</evidence>
<evidence type="ECO:0007829" key="6">
    <source>
        <dbReference type="PDB" id="4ZMI"/>
    </source>
</evidence>
<evidence type="ECO:0007829" key="7">
    <source>
        <dbReference type="PDB" id="4ZMK"/>
    </source>
</evidence>
<proteinExistence type="evidence at protein level"/>
<organism>
    <name type="scientific">Schizosaccharomyces pombe (strain 972 / ATCC 24843)</name>
    <name type="common">Fission yeast</name>
    <dbReference type="NCBI Taxonomy" id="284812"/>
    <lineage>
        <taxon>Eukaryota</taxon>
        <taxon>Fungi</taxon>
        <taxon>Dikarya</taxon>
        <taxon>Ascomycota</taxon>
        <taxon>Taphrinomycotina</taxon>
        <taxon>Schizosaccharomycetes</taxon>
        <taxon>Schizosaccharomycetales</taxon>
        <taxon>Schizosaccharomycetaceae</taxon>
        <taxon>Schizosaccharomyces</taxon>
    </lineage>
</organism>
<accession>P79005</accession>
<accession>O00049</accession>
<gene>
    <name type="primary">taz1</name>
    <name type="synonym">myb</name>
    <name type="synonym">myb1</name>
    <name type="ORF">SPAC16A10.07c</name>
</gene>
<dbReference type="EMBL" id="Y09406">
    <property type="protein sequence ID" value="CAA70568.1"/>
    <property type="molecule type" value="mRNA"/>
</dbReference>
<dbReference type="EMBL" id="CU329670">
    <property type="protein sequence ID" value="CAB10000.1"/>
    <property type="molecule type" value="Genomic_DNA"/>
</dbReference>
<dbReference type="PIR" id="T37772">
    <property type="entry name" value="T37772"/>
</dbReference>
<dbReference type="RefSeq" id="NP_594047.1">
    <property type="nucleotide sequence ID" value="NM_001019472.2"/>
</dbReference>
<dbReference type="PDB" id="2L3N">
    <property type="method" value="NMR"/>
    <property type="chains" value="A=362-395"/>
</dbReference>
<dbReference type="PDB" id="4ZMI">
    <property type="method" value="X-ray"/>
    <property type="resolution" value="2.30 A"/>
    <property type="chains" value="A=127-361"/>
</dbReference>
<dbReference type="PDB" id="4ZMK">
    <property type="method" value="X-ray"/>
    <property type="resolution" value="1.50 A"/>
    <property type="chains" value="A=408-478"/>
</dbReference>
<dbReference type="PDBsum" id="2L3N"/>
<dbReference type="PDBsum" id="4ZMI"/>
<dbReference type="PDBsum" id="4ZMK"/>
<dbReference type="SMR" id="P79005"/>
<dbReference type="BioGRID" id="278779">
    <property type="interactions" value="49"/>
</dbReference>
<dbReference type="ComplexPortal" id="CPX-25757">
    <property type="entry name" value="Shelterin complex"/>
</dbReference>
<dbReference type="DIP" id="DIP-59072N"/>
<dbReference type="FunCoup" id="P79005">
    <property type="interactions" value="2"/>
</dbReference>
<dbReference type="IntAct" id="P79005">
    <property type="interactions" value="1"/>
</dbReference>
<dbReference type="STRING" id="284812.P79005"/>
<dbReference type="iPTMnet" id="P79005"/>
<dbReference type="PaxDb" id="4896-SPAC16A10.07c.1"/>
<dbReference type="EnsemblFungi" id="SPAC16A10.07c.1">
    <property type="protein sequence ID" value="SPAC16A10.07c.1:pep"/>
    <property type="gene ID" value="SPAC16A10.07c"/>
</dbReference>
<dbReference type="GeneID" id="2542313"/>
<dbReference type="KEGG" id="spo:2542313"/>
<dbReference type="PomBase" id="SPAC16A10.07c">
    <property type="gene designation" value="taz1"/>
</dbReference>
<dbReference type="VEuPathDB" id="FungiDB:SPAC16A10.07c"/>
<dbReference type="HOGENOM" id="CLU_422819_0_0_1"/>
<dbReference type="InParanoid" id="P79005"/>
<dbReference type="OMA" id="PAYCEIH"/>
<dbReference type="EvolutionaryTrace" id="P79005"/>
<dbReference type="PRO" id="PR:P79005"/>
<dbReference type="Proteomes" id="UP000002485">
    <property type="component" value="Chromosome I"/>
</dbReference>
<dbReference type="GO" id="GO:0000785">
    <property type="term" value="C:chromatin"/>
    <property type="evidence" value="ECO:0000314"/>
    <property type="project" value="PomBase"/>
</dbReference>
<dbReference type="GO" id="GO:0140445">
    <property type="term" value="C:chromosome, telomeric repeat region"/>
    <property type="evidence" value="ECO:0000314"/>
    <property type="project" value="PomBase"/>
</dbReference>
<dbReference type="GO" id="GO:0005737">
    <property type="term" value="C:cytoplasm"/>
    <property type="evidence" value="ECO:0007669"/>
    <property type="project" value="UniProtKB-SubCell"/>
</dbReference>
<dbReference type="GO" id="GO:0035974">
    <property type="term" value="C:meiotic spindle pole body"/>
    <property type="evidence" value="ECO:0000314"/>
    <property type="project" value="PomBase"/>
</dbReference>
<dbReference type="GO" id="GO:0034399">
    <property type="term" value="C:nuclear periphery"/>
    <property type="evidence" value="ECO:0000314"/>
    <property type="project" value="PomBase"/>
</dbReference>
<dbReference type="GO" id="GO:0005634">
    <property type="term" value="C:nucleus"/>
    <property type="evidence" value="ECO:0000269"/>
    <property type="project" value="PomBase"/>
</dbReference>
<dbReference type="GO" id="GO:0110092">
    <property type="term" value="C:nucleus leading edge"/>
    <property type="evidence" value="ECO:0000314"/>
    <property type="project" value="PomBase"/>
</dbReference>
<dbReference type="GO" id="GO:0070187">
    <property type="term" value="C:shelterin complex"/>
    <property type="evidence" value="ECO:0000314"/>
    <property type="project" value="PomBase"/>
</dbReference>
<dbReference type="GO" id="GO:0003691">
    <property type="term" value="F:double-stranded telomeric DNA binding"/>
    <property type="evidence" value="ECO:0000314"/>
    <property type="project" value="PomBase"/>
</dbReference>
<dbReference type="GO" id="GO:0060090">
    <property type="term" value="F:molecular adaptor activity"/>
    <property type="evidence" value="ECO:0000269"/>
    <property type="project" value="PomBase"/>
</dbReference>
<dbReference type="GO" id="GO:0042803">
    <property type="term" value="F:protein homodimerization activity"/>
    <property type="evidence" value="ECO:0007669"/>
    <property type="project" value="InterPro"/>
</dbReference>
<dbReference type="GO" id="GO:0042162">
    <property type="term" value="F:telomeric DNA binding"/>
    <property type="evidence" value="ECO:0000314"/>
    <property type="project" value="PomBase"/>
</dbReference>
<dbReference type="GO" id="GO:0070197">
    <property type="term" value="P:meiotic attachment of telomere to nuclear envelope"/>
    <property type="evidence" value="ECO:0000315"/>
    <property type="project" value="PomBase"/>
</dbReference>
<dbReference type="GO" id="GO:0032121">
    <property type="term" value="P:meiotic attachment of telomeric heterochromatin to spindle pole body"/>
    <property type="evidence" value="ECO:0000315"/>
    <property type="project" value="PomBase"/>
</dbReference>
<dbReference type="GO" id="GO:0044820">
    <property type="term" value="P:mitotic telomere tethering at nuclear periphery"/>
    <property type="evidence" value="ECO:0000315"/>
    <property type="project" value="PomBase"/>
</dbReference>
<dbReference type="GO" id="GO:0031848">
    <property type="term" value="P:protection from non-homologous end joining at telomere"/>
    <property type="evidence" value="ECO:0000315"/>
    <property type="project" value="PomBase"/>
</dbReference>
<dbReference type="GO" id="GO:0016233">
    <property type="term" value="P:telomere capping"/>
    <property type="evidence" value="ECO:0000315"/>
    <property type="project" value="PomBase"/>
</dbReference>
<dbReference type="GO" id="GO:0000723">
    <property type="term" value="P:telomere maintenance"/>
    <property type="evidence" value="ECO:0000316"/>
    <property type="project" value="PomBase"/>
</dbReference>
<dbReference type="CDD" id="cd11660">
    <property type="entry name" value="SANT_TRF"/>
    <property type="match status" value="1"/>
</dbReference>
<dbReference type="CDD" id="cd11671">
    <property type="entry name" value="TAZ1_RBM"/>
    <property type="match status" value="1"/>
</dbReference>
<dbReference type="FunFam" id="1.10.10.60:FF:000570">
    <property type="entry name" value="Transcriptional adaptor ADA2, putative"/>
    <property type="match status" value="1"/>
</dbReference>
<dbReference type="Gene3D" id="1.10.1050.20">
    <property type="match status" value="1"/>
</dbReference>
<dbReference type="Gene3D" id="1.10.10.60">
    <property type="entry name" value="Homeodomain-like"/>
    <property type="match status" value="1"/>
</dbReference>
<dbReference type="InterPro" id="IPR009057">
    <property type="entry name" value="Homeodomain-like_sf"/>
</dbReference>
<dbReference type="InterPro" id="IPR001005">
    <property type="entry name" value="SANT/Myb"/>
</dbReference>
<dbReference type="InterPro" id="IPR013867">
    <property type="entry name" value="Telomere_rpt-bd_fac_dimer_dom"/>
</dbReference>
<dbReference type="Pfam" id="PF00249">
    <property type="entry name" value="Myb_DNA-binding"/>
    <property type="match status" value="1"/>
</dbReference>
<dbReference type="Pfam" id="PF22332">
    <property type="entry name" value="TAZ1_RBM"/>
    <property type="match status" value="1"/>
</dbReference>
<dbReference type="Pfam" id="PF08558">
    <property type="entry name" value="TRF"/>
    <property type="match status" value="1"/>
</dbReference>
<dbReference type="SMART" id="SM00717">
    <property type="entry name" value="SANT"/>
    <property type="match status" value="1"/>
</dbReference>
<dbReference type="SUPFAM" id="SSF46689">
    <property type="entry name" value="Homeodomain-like"/>
    <property type="match status" value="1"/>
</dbReference>
<comment type="function">
    <text>Regulates telomere length and function. Required for the repression of telomere-adjacent gene expression and for normal meiosis or sporulation. It may be a negative regulator of the telomere-replicating enzyme, telomerase, or may protect against activation of telomerase-independent pathways of telomere elongation. It may be involved in the interactions between chromosomes and spindle proteins, disruption of these interactions would lead to defective meiosis.</text>
</comment>
<comment type="subunit">
    <text evidence="2 3">Interacts with taf1 via the Myb domain, and ccq1.</text>
</comment>
<comment type="interaction">
    <interactant intactId="EBI-15903288">
        <id>P79005</id>
    </interactant>
    <interactant intactId="EBI-929794">
        <id>Q96TL7</id>
        <label>rap1</label>
    </interactant>
    <organismsDiffer>false</organismsDiffer>
    <experiments>5</experiments>
</comment>
<comment type="subcellular location">
    <subcellularLocation>
        <location>Cytoplasm</location>
    </subcellularLocation>
    <subcellularLocation>
        <location>Nucleus</location>
    </subcellularLocation>
    <subcellularLocation>
        <location>Chromosome</location>
        <location>Telomere</location>
    </subcellularLocation>
</comment>
<name>TAZ1_SCHPO</name>
<reference key="1">
    <citation type="journal article" date="1997" name="Nature">
        <title>Regulation of telomere length and function by a Myb-domain protein in fission yeast.</title>
        <authorList>
            <person name="Cooper J.P."/>
            <person name="Nimmo E.R."/>
            <person name="Allshire R.C."/>
            <person name="Cech T.R."/>
        </authorList>
    </citation>
    <scope>NUCLEOTIDE SEQUENCE [MRNA]</scope>
    <source>
        <strain>972 / ATCC 24843</strain>
    </source>
</reference>
<reference key="2">
    <citation type="journal article" date="2002" name="Nature">
        <title>The genome sequence of Schizosaccharomyces pombe.</title>
        <authorList>
            <person name="Wood V."/>
            <person name="Gwilliam R."/>
            <person name="Rajandream M.A."/>
            <person name="Lyne M.H."/>
            <person name="Lyne R."/>
            <person name="Stewart A."/>
            <person name="Sgouros J.G."/>
            <person name="Peat N."/>
            <person name="Hayles J."/>
            <person name="Baker S.G."/>
            <person name="Basham D."/>
            <person name="Bowman S."/>
            <person name="Brooks K."/>
            <person name="Brown D."/>
            <person name="Brown S."/>
            <person name="Chillingworth T."/>
            <person name="Churcher C.M."/>
            <person name="Collins M."/>
            <person name="Connor R."/>
            <person name="Cronin A."/>
            <person name="Davis P."/>
            <person name="Feltwell T."/>
            <person name="Fraser A."/>
            <person name="Gentles S."/>
            <person name="Goble A."/>
            <person name="Hamlin N."/>
            <person name="Harris D.E."/>
            <person name="Hidalgo J."/>
            <person name="Hodgson G."/>
            <person name="Holroyd S."/>
            <person name="Hornsby T."/>
            <person name="Howarth S."/>
            <person name="Huckle E.J."/>
            <person name="Hunt S."/>
            <person name="Jagels K."/>
            <person name="James K.D."/>
            <person name="Jones L."/>
            <person name="Jones M."/>
            <person name="Leather S."/>
            <person name="McDonald S."/>
            <person name="McLean J."/>
            <person name="Mooney P."/>
            <person name="Moule S."/>
            <person name="Mungall K.L."/>
            <person name="Murphy L.D."/>
            <person name="Niblett D."/>
            <person name="Odell C."/>
            <person name="Oliver K."/>
            <person name="O'Neil S."/>
            <person name="Pearson D."/>
            <person name="Quail M.A."/>
            <person name="Rabbinowitsch E."/>
            <person name="Rutherford K.M."/>
            <person name="Rutter S."/>
            <person name="Saunders D."/>
            <person name="Seeger K."/>
            <person name="Sharp S."/>
            <person name="Skelton J."/>
            <person name="Simmonds M.N."/>
            <person name="Squares R."/>
            <person name="Squares S."/>
            <person name="Stevens K."/>
            <person name="Taylor K."/>
            <person name="Taylor R.G."/>
            <person name="Tivey A."/>
            <person name="Walsh S.V."/>
            <person name="Warren T."/>
            <person name="Whitehead S."/>
            <person name="Woodward J.R."/>
            <person name="Volckaert G."/>
            <person name="Aert R."/>
            <person name="Robben J."/>
            <person name="Grymonprez B."/>
            <person name="Weltjens I."/>
            <person name="Vanstreels E."/>
            <person name="Rieger M."/>
            <person name="Schaefer M."/>
            <person name="Mueller-Auer S."/>
            <person name="Gabel C."/>
            <person name="Fuchs M."/>
            <person name="Duesterhoeft A."/>
            <person name="Fritzc C."/>
            <person name="Holzer E."/>
            <person name="Moestl D."/>
            <person name="Hilbert H."/>
            <person name="Borzym K."/>
            <person name="Langer I."/>
            <person name="Beck A."/>
            <person name="Lehrach H."/>
            <person name="Reinhardt R."/>
            <person name="Pohl T.M."/>
            <person name="Eger P."/>
            <person name="Zimmermann W."/>
            <person name="Wedler H."/>
            <person name="Wambutt R."/>
            <person name="Purnelle B."/>
            <person name="Goffeau A."/>
            <person name="Cadieu E."/>
            <person name="Dreano S."/>
            <person name="Gloux S."/>
            <person name="Lelaure V."/>
            <person name="Mottier S."/>
            <person name="Galibert F."/>
            <person name="Aves S.J."/>
            <person name="Xiang Z."/>
            <person name="Hunt C."/>
            <person name="Moore K."/>
            <person name="Hurst S.M."/>
            <person name="Lucas M."/>
            <person name="Rochet M."/>
            <person name="Gaillardin C."/>
            <person name="Tallada V.A."/>
            <person name="Garzon A."/>
            <person name="Thode G."/>
            <person name="Daga R.R."/>
            <person name="Cruzado L."/>
            <person name="Jimenez J."/>
            <person name="Sanchez M."/>
            <person name="del Rey F."/>
            <person name="Benito J."/>
            <person name="Dominguez A."/>
            <person name="Revuelta J.L."/>
            <person name="Moreno S."/>
            <person name="Armstrong J."/>
            <person name="Forsburg S.L."/>
            <person name="Cerutti L."/>
            <person name="Lowe T."/>
            <person name="McCombie W.R."/>
            <person name="Paulsen I."/>
            <person name="Potashkin J."/>
            <person name="Shpakovski G.V."/>
            <person name="Ussery D."/>
            <person name="Barrell B.G."/>
            <person name="Nurse P."/>
        </authorList>
    </citation>
    <scope>NUCLEOTIDE SEQUENCE [LARGE SCALE GENOMIC DNA]</scope>
    <source>
        <strain>972 / ATCC 24843</strain>
    </source>
</reference>
<reference key="3">
    <citation type="journal article" date="2001" name="Curr. Genet.">
        <title>Schizosaccharomyces pombe taf1+ is required for nitrogen starvation-induced sexual development and for entering the dormant GO state.</title>
        <authorList>
            <person name="Ueno M."/>
            <person name="Kurokawa R."/>
            <person name="Renauld H."/>
            <person name="Watanabe K."/>
            <person name="Ushimaru T."/>
            <person name="Uritani M."/>
            <person name="Yoshinaga K."/>
            <person name="Hiraoka Y."/>
        </authorList>
    </citation>
    <scope>INTERACTION WITH TAF1</scope>
</reference>
<reference key="4">
    <citation type="journal article" date="2004" name="Mol. Cell">
        <title>An SMC-domain protein in fission yeast links telomeres to the meiotic centrosome.</title>
        <authorList>
            <person name="Flory M.R."/>
            <person name="Carson A.R."/>
            <person name="Muller E.G."/>
            <person name="Aebersold R."/>
        </authorList>
    </citation>
    <scope>INTERACTION WITH CCQ1</scope>
    <scope>SUBCELLULAR LOCATION</scope>
</reference>
<reference key="5">
    <citation type="journal article" date="2006" name="Cell">
        <title>Meiotic proteins bqt1 and bqt2 tether telomeres to form the bouquet arrangement of chromosomes.</title>
        <authorList>
            <person name="Chikashige Y."/>
            <person name="Tsutsumi C."/>
            <person name="Yamane M."/>
            <person name="Okamasa K."/>
            <person name="Haraguchi T."/>
            <person name="Hiraoka Y."/>
        </authorList>
    </citation>
    <scope>SUBCELLULAR LOCATION</scope>
</reference>
<reference key="6">
    <citation type="journal article" date="2006" name="Nat. Biotechnol.">
        <title>ORFeome cloning and global analysis of protein localization in the fission yeast Schizosaccharomyces pombe.</title>
        <authorList>
            <person name="Matsuyama A."/>
            <person name="Arai R."/>
            <person name="Yashiroda Y."/>
            <person name="Shirai A."/>
            <person name="Kamata A."/>
            <person name="Sekido S."/>
            <person name="Kobayashi Y."/>
            <person name="Hashimoto A."/>
            <person name="Hamamoto M."/>
            <person name="Hiraoka Y."/>
            <person name="Horinouchi S."/>
            <person name="Yoshida M."/>
        </authorList>
    </citation>
    <scope>SUBCELLULAR LOCATION [LARGE SCALE ANALYSIS]</scope>
</reference>
<reference key="7">
    <citation type="journal article" date="2008" name="J. Proteome Res.">
        <title>Phosphoproteome analysis of fission yeast.</title>
        <authorList>
            <person name="Wilson-Grady J.T."/>
            <person name="Villen J."/>
            <person name="Gygi S.P."/>
        </authorList>
    </citation>
    <scope>PHOSPHORYLATION [LARGE SCALE ANALYSIS] AT SER-332</scope>
    <scope>IDENTIFICATION BY MASS SPECTROMETRY</scope>
</reference>
<sequence>MISVQSTETIQKVLENEGDQQFDKEVVQNSDSNIETGQISDSLTKAVEERAETESSSNLSNFTTSESESSKPAYCFNSHSQNMAEGSISIPVISHSMNVENEVSTAEGQDSRTGESENDQNAMIVRSIWDIEKASLLVNDCQNIANMAEQKVMMVSAIFSESSKDIVNPESFSERLGKETVKDLYEFNEQLTTKYGLEFRTIFFSYIRKYDAYWCLFEDLEKPLKSIQFFTGLIDLLDNTNKHLTLRSIVLDALLSADEEDSFYGDALVLFEELVIRYFGTDSNPSIDASEFILSCLPYTSLDALNVVCGQVWKSQKICDFLKSTIGNTSNSPLQLRASFPAFVNAVIHFLLEFKNVRRLERKDLSVKGMLYDSDSQQILNRLRERVSGSTAQSADEASGHESDASEDTFSERTLGLNSIDNTEISEVVSLGLVSSALDKITGLLSADNLSETVSQARDFSHTLSKSLKSRAKSLSQKEAANRSKLIAKRGDNLRREASLSSEQDDLSEDFPPVRESDEQESRSGGRSSAMRVSIERSAARSGTRRSQGNPYEGYRTRRKWTDEEENELYEMISQHGCCWSKIIHIQKLENGPLKTFGPTQIKDKARLIKARFMKQNRLQELYSKSLNWKNVTVGQAYCELHKIPYIEATPPLLREELVNYQS</sequence>
<feature type="chain" id="PRO_0000197124" description="Telomere length regulator taz1">
    <location>
        <begin position="1"/>
        <end position="663"/>
    </location>
</feature>
<feature type="domain" description="Myb-like">
    <location>
        <begin position="556"/>
        <end position="612"/>
    </location>
</feature>
<feature type="region of interest" description="Disordered" evidence="1">
    <location>
        <begin position="15"/>
        <end position="72"/>
    </location>
</feature>
<feature type="region of interest" description="Disordered" evidence="1">
    <location>
        <begin position="389"/>
        <end position="412"/>
    </location>
</feature>
<feature type="region of interest" description="Disordered" evidence="1">
    <location>
        <begin position="471"/>
        <end position="554"/>
    </location>
</feature>
<feature type="compositionally biased region" description="Polar residues" evidence="1">
    <location>
        <begin position="27"/>
        <end position="43"/>
    </location>
</feature>
<feature type="compositionally biased region" description="Polar residues" evidence="1">
    <location>
        <begin position="54"/>
        <end position="67"/>
    </location>
</feature>
<feature type="compositionally biased region" description="Basic and acidic residues" evidence="1">
    <location>
        <begin position="489"/>
        <end position="498"/>
    </location>
</feature>
<feature type="compositionally biased region" description="Basic and acidic residues" evidence="1">
    <location>
        <begin position="512"/>
        <end position="524"/>
    </location>
</feature>
<feature type="modified residue" description="Phosphoserine" evidence="4">
    <location>
        <position position="332"/>
    </location>
</feature>
<feature type="helix" evidence="6">
    <location>
        <begin position="131"/>
        <end position="161"/>
    </location>
</feature>
<feature type="turn" evidence="6">
    <location>
        <begin position="163"/>
        <end position="165"/>
    </location>
</feature>
<feature type="helix" evidence="6">
    <location>
        <begin position="169"/>
        <end position="176"/>
    </location>
</feature>
<feature type="helix" evidence="6">
    <location>
        <begin position="178"/>
        <end position="194"/>
    </location>
</feature>
<feature type="helix" evidence="6">
    <location>
        <begin position="204"/>
        <end position="209"/>
    </location>
</feature>
<feature type="helix" evidence="6">
    <location>
        <begin position="211"/>
        <end position="217"/>
    </location>
</feature>
<feature type="helix" evidence="6">
    <location>
        <begin position="221"/>
        <end position="233"/>
    </location>
</feature>
<feature type="helix" evidence="6">
    <location>
        <begin position="234"/>
        <end position="237"/>
    </location>
</feature>
<feature type="helix" evidence="6">
    <location>
        <begin position="244"/>
        <end position="256"/>
    </location>
</feature>
<feature type="helix" evidence="6">
    <location>
        <begin position="263"/>
        <end position="280"/>
    </location>
</feature>
<feature type="helix" evidence="6">
    <location>
        <begin position="289"/>
        <end position="294"/>
    </location>
</feature>
<feature type="helix" evidence="6">
    <location>
        <begin position="302"/>
        <end position="308"/>
    </location>
</feature>
<feature type="helix" evidence="6">
    <location>
        <begin position="311"/>
        <end position="315"/>
    </location>
</feature>
<feature type="helix" evidence="6">
    <location>
        <begin position="318"/>
        <end position="329"/>
    </location>
</feature>
<feature type="helix" evidence="6">
    <location>
        <begin position="340"/>
        <end position="355"/>
    </location>
</feature>
<feature type="helix" evidence="5">
    <location>
        <begin position="376"/>
        <end position="389"/>
    </location>
</feature>
<feature type="helix" evidence="7">
    <location>
        <begin position="410"/>
        <end position="414"/>
    </location>
</feature>
<feature type="turn" evidence="7">
    <location>
        <begin position="418"/>
        <end position="421"/>
    </location>
</feature>
<feature type="helix" evidence="7">
    <location>
        <begin position="427"/>
        <end position="447"/>
    </location>
</feature>
<feature type="helix" evidence="7">
    <location>
        <begin position="451"/>
        <end position="477"/>
    </location>
</feature>
<protein>
    <recommendedName>
        <fullName>Telomere length regulator taz1</fullName>
    </recommendedName>
</protein>